<dbReference type="EC" id="3.2.2.23" evidence="2"/>
<dbReference type="EC" id="4.2.99.18" evidence="2"/>
<dbReference type="EMBL" id="AE005674">
    <property type="protein sequence ID" value="AAN45121.2"/>
    <property type="molecule type" value="Genomic_DNA"/>
</dbReference>
<dbReference type="EMBL" id="AE014073">
    <property type="protein sequence ID" value="AAP19071.1"/>
    <property type="molecule type" value="Genomic_DNA"/>
</dbReference>
<dbReference type="RefSeq" id="NP_709414.2">
    <property type="nucleotide sequence ID" value="NC_004337.2"/>
</dbReference>
<dbReference type="RefSeq" id="WP_001114533.1">
    <property type="nucleotide sequence ID" value="NZ_WPGW01000042.1"/>
</dbReference>
<dbReference type="SMR" id="P64149"/>
<dbReference type="STRING" id="198214.SF3674"/>
<dbReference type="PaxDb" id="198214-SF3674"/>
<dbReference type="GeneID" id="1026213"/>
<dbReference type="GeneID" id="93778348"/>
<dbReference type="KEGG" id="sfl:SF3674"/>
<dbReference type="KEGG" id="sfx:S4094"/>
<dbReference type="PATRIC" id="fig|198214.7.peg.4337"/>
<dbReference type="HOGENOM" id="CLU_038423_1_1_6"/>
<dbReference type="Proteomes" id="UP000001006">
    <property type="component" value="Chromosome"/>
</dbReference>
<dbReference type="Proteomes" id="UP000002673">
    <property type="component" value="Chromosome"/>
</dbReference>
<dbReference type="GO" id="GO:0034039">
    <property type="term" value="F:8-oxo-7,8-dihydroguanine DNA N-glycosylase activity"/>
    <property type="evidence" value="ECO:0007669"/>
    <property type="project" value="TreeGrafter"/>
</dbReference>
<dbReference type="GO" id="GO:0140078">
    <property type="term" value="F:class I DNA-(apurinic or apyrimidinic site) endonuclease activity"/>
    <property type="evidence" value="ECO:0007669"/>
    <property type="project" value="UniProtKB-EC"/>
</dbReference>
<dbReference type="GO" id="GO:0003684">
    <property type="term" value="F:damaged DNA binding"/>
    <property type="evidence" value="ECO:0007669"/>
    <property type="project" value="InterPro"/>
</dbReference>
<dbReference type="GO" id="GO:0008270">
    <property type="term" value="F:zinc ion binding"/>
    <property type="evidence" value="ECO:0007669"/>
    <property type="project" value="UniProtKB-UniRule"/>
</dbReference>
<dbReference type="GO" id="GO:0006284">
    <property type="term" value="P:base-excision repair"/>
    <property type="evidence" value="ECO:0007669"/>
    <property type="project" value="InterPro"/>
</dbReference>
<dbReference type="CDD" id="cd08966">
    <property type="entry name" value="EcFpg-like_N"/>
    <property type="match status" value="1"/>
</dbReference>
<dbReference type="FunFam" id="1.10.8.50:FF:000003">
    <property type="entry name" value="Formamidopyrimidine-DNA glycosylase"/>
    <property type="match status" value="1"/>
</dbReference>
<dbReference type="FunFam" id="3.20.190.10:FF:000001">
    <property type="entry name" value="Formamidopyrimidine-DNA glycosylase"/>
    <property type="match status" value="1"/>
</dbReference>
<dbReference type="Gene3D" id="1.10.8.50">
    <property type="match status" value="1"/>
</dbReference>
<dbReference type="Gene3D" id="3.20.190.10">
    <property type="entry name" value="MutM-like, N-terminal"/>
    <property type="match status" value="1"/>
</dbReference>
<dbReference type="HAMAP" id="MF_00103">
    <property type="entry name" value="Fapy_DNA_glycosyl"/>
    <property type="match status" value="1"/>
</dbReference>
<dbReference type="InterPro" id="IPR015886">
    <property type="entry name" value="DNA_glyclase/AP_lyase_DNA-bd"/>
</dbReference>
<dbReference type="InterPro" id="IPR015887">
    <property type="entry name" value="DNA_glyclase_Znf_dom_DNA_BS"/>
</dbReference>
<dbReference type="InterPro" id="IPR020629">
    <property type="entry name" value="Formamido-pyr_DNA_Glyclase"/>
</dbReference>
<dbReference type="InterPro" id="IPR012319">
    <property type="entry name" value="FPG_cat"/>
</dbReference>
<dbReference type="InterPro" id="IPR035937">
    <property type="entry name" value="MutM-like_N-ter"/>
</dbReference>
<dbReference type="InterPro" id="IPR010979">
    <property type="entry name" value="Ribosomal_uS13-like_H2TH"/>
</dbReference>
<dbReference type="InterPro" id="IPR000214">
    <property type="entry name" value="Znf_DNA_glyclase/AP_lyase"/>
</dbReference>
<dbReference type="InterPro" id="IPR010663">
    <property type="entry name" value="Znf_FPG/IleRS"/>
</dbReference>
<dbReference type="NCBIfam" id="TIGR00577">
    <property type="entry name" value="fpg"/>
    <property type="match status" value="1"/>
</dbReference>
<dbReference type="NCBIfam" id="NF002211">
    <property type="entry name" value="PRK01103.1"/>
    <property type="match status" value="1"/>
</dbReference>
<dbReference type="PANTHER" id="PTHR22993">
    <property type="entry name" value="FORMAMIDOPYRIMIDINE-DNA GLYCOSYLASE"/>
    <property type="match status" value="1"/>
</dbReference>
<dbReference type="PANTHER" id="PTHR22993:SF9">
    <property type="entry name" value="FORMAMIDOPYRIMIDINE-DNA GLYCOSYLASE"/>
    <property type="match status" value="1"/>
</dbReference>
<dbReference type="Pfam" id="PF01149">
    <property type="entry name" value="Fapy_DNA_glyco"/>
    <property type="match status" value="1"/>
</dbReference>
<dbReference type="Pfam" id="PF06831">
    <property type="entry name" value="H2TH"/>
    <property type="match status" value="1"/>
</dbReference>
<dbReference type="Pfam" id="PF06827">
    <property type="entry name" value="zf-FPG_IleRS"/>
    <property type="match status" value="1"/>
</dbReference>
<dbReference type="SMART" id="SM00898">
    <property type="entry name" value="Fapy_DNA_glyco"/>
    <property type="match status" value="1"/>
</dbReference>
<dbReference type="SMART" id="SM01232">
    <property type="entry name" value="H2TH"/>
    <property type="match status" value="1"/>
</dbReference>
<dbReference type="SUPFAM" id="SSF57716">
    <property type="entry name" value="Glucocorticoid receptor-like (DNA-binding domain)"/>
    <property type="match status" value="1"/>
</dbReference>
<dbReference type="SUPFAM" id="SSF81624">
    <property type="entry name" value="N-terminal domain of MutM-like DNA repair proteins"/>
    <property type="match status" value="1"/>
</dbReference>
<dbReference type="SUPFAM" id="SSF46946">
    <property type="entry name" value="S13-like H2TH domain"/>
    <property type="match status" value="1"/>
</dbReference>
<dbReference type="PROSITE" id="PS51068">
    <property type="entry name" value="FPG_CAT"/>
    <property type="match status" value="1"/>
</dbReference>
<dbReference type="PROSITE" id="PS01242">
    <property type="entry name" value="ZF_FPG_1"/>
    <property type="match status" value="1"/>
</dbReference>
<dbReference type="PROSITE" id="PS51066">
    <property type="entry name" value="ZF_FPG_2"/>
    <property type="match status" value="1"/>
</dbReference>
<comment type="function">
    <text evidence="2">Involved in base excision repair of DNA damaged by oxidation or by mutagenic agents. Acts as a DNA glycosylase that recognizes and removes damaged bases. Has a preference for oxidized purines, such as 7,8-dihydro-8-oxoguanine (8-oxoG). Has AP (apurinic/apyrimidinic) lyase activity and introduces nicks in the DNA strand. Cleaves the DNA backbone by beta-delta elimination to generate a single-strand break at the site of the removed base with both 3'- and 5'-phosphates.</text>
</comment>
<comment type="catalytic activity">
    <reaction evidence="2">
        <text>Hydrolysis of DNA containing ring-opened 7-methylguanine residues, releasing 2,6-diamino-4-hydroxy-5-(N-methyl)formamidopyrimidine.</text>
        <dbReference type="EC" id="3.2.2.23"/>
    </reaction>
</comment>
<comment type="catalytic activity">
    <reaction evidence="2">
        <text>2'-deoxyribonucleotide-(2'-deoxyribose 5'-phosphate)-2'-deoxyribonucleotide-DNA = a 3'-end 2'-deoxyribonucleotide-(2,3-dehydro-2,3-deoxyribose 5'-phosphate)-DNA + a 5'-end 5'-phospho-2'-deoxyribonucleoside-DNA + H(+)</text>
        <dbReference type="Rhea" id="RHEA:66592"/>
        <dbReference type="Rhea" id="RHEA-COMP:13180"/>
        <dbReference type="Rhea" id="RHEA-COMP:16897"/>
        <dbReference type="Rhea" id="RHEA-COMP:17067"/>
        <dbReference type="ChEBI" id="CHEBI:15378"/>
        <dbReference type="ChEBI" id="CHEBI:136412"/>
        <dbReference type="ChEBI" id="CHEBI:157695"/>
        <dbReference type="ChEBI" id="CHEBI:167181"/>
        <dbReference type="EC" id="4.2.99.18"/>
    </reaction>
</comment>
<comment type="cofactor">
    <cofactor evidence="2">
        <name>Zn(2+)</name>
        <dbReference type="ChEBI" id="CHEBI:29105"/>
    </cofactor>
    <text evidence="2">Binds 1 zinc ion per subunit.</text>
</comment>
<comment type="subunit">
    <text evidence="2">Monomer.</text>
</comment>
<comment type="similarity">
    <text evidence="2">Belongs to the FPG family.</text>
</comment>
<gene>
    <name evidence="2" type="primary">mutM</name>
    <name evidence="2" type="synonym">fpg</name>
    <name type="ordered locus">SF3674</name>
    <name type="ordered locus">S4094</name>
</gene>
<keyword id="KW-0227">DNA damage</keyword>
<keyword id="KW-0234">DNA repair</keyword>
<keyword id="KW-0238">DNA-binding</keyword>
<keyword id="KW-0326">Glycosidase</keyword>
<keyword id="KW-0378">Hydrolase</keyword>
<keyword id="KW-0456">Lyase</keyword>
<keyword id="KW-0479">Metal-binding</keyword>
<keyword id="KW-0511">Multifunctional enzyme</keyword>
<keyword id="KW-1185">Reference proteome</keyword>
<keyword id="KW-0862">Zinc</keyword>
<keyword id="KW-0863">Zinc-finger</keyword>
<accession>P64149</accession>
<accession>Q8XDA9</accession>
<reference key="1">
    <citation type="journal article" date="2002" name="Nucleic Acids Res.">
        <title>Genome sequence of Shigella flexneri 2a: insights into pathogenicity through comparison with genomes of Escherichia coli K12 and O157.</title>
        <authorList>
            <person name="Jin Q."/>
            <person name="Yuan Z."/>
            <person name="Xu J."/>
            <person name="Wang Y."/>
            <person name="Shen Y."/>
            <person name="Lu W."/>
            <person name="Wang J."/>
            <person name="Liu H."/>
            <person name="Yang J."/>
            <person name="Yang F."/>
            <person name="Zhang X."/>
            <person name="Zhang J."/>
            <person name="Yang G."/>
            <person name="Wu H."/>
            <person name="Qu D."/>
            <person name="Dong J."/>
            <person name="Sun L."/>
            <person name="Xue Y."/>
            <person name="Zhao A."/>
            <person name="Gao Y."/>
            <person name="Zhu J."/>
            <person name="Kan B."/>
            <person name="Ding K."/>
            <person name="Chen S."/>
            <person name="Cheng H."/>
            <person name="Yao Z."/>
            <person name="He B."/>
            <person name="Chen R."/>
            <person name="Ma D."/>
            <person name="Qiang B."/>
            <person name="Wen Y."/>
            <person name="Hou Y."/>
            <person name="Yu J."/>
        </authorList>
    </citation>
    <scope>NUCLEOTIDE SEQUENCE [LARGE SCALE GENOMIC DNA]</scope>
    <source>
        <strain>301 / Serotype 2a</strain>
    </source>
</reference>
<reference key="2">
    <citation type="journal article" date="2003" name="Infect. Immun.">
        <title>Complete genome sequence and comparative genomics of Shigella flexneri serotype 2a strain 2457T.</title>
        <authorList>
            <person name="Wei J."/>
            <person name="Goldberg M.B."/>
            <person name="Burland V."/>
            <person name="Venkatesan M.M."/>
            <person name="Deng W."/>
            <person name="Fournier G."/>
            <person name="Mayhew G.F."/>
            <person name="Plunkett G. III"/>
            <person name="Rose D.J."/>
            <person name="Darling A."/>
            <person name="Mau B."/>
            <person name="Perna N.T."/>
            <person name="Payne S.M."/>
            <person name="Runyen-Janecky L.J."/>
            <person name="Zhou S."/>
            <person name="Schwartz D.C."/>
            <person name="Blattner F.R."/>
        </authorList>
    </citation>
    <scope>NUCLEOTIDE SEQUENCE [LARGE SCALE GENOMIC DNA]</scope>
    <source>
        <strain>ATCC 700930 / 2457T / Serotype 2a</strain>
    </source>
</reference>
<sequence>MPELPEVETSRRGIEPHLVGATILHAVVRNGRLRWPVSEEIYRLSDQPVLSVQRRAKYLLLELPEGWIIIHLGMSGSLRILPEELPPEKHDHVDLVMSNGKVLRYTDPRRFGAWLWTKELEGHNVLAHLGPEPLSDDFNGEYLHQKCAKKKTAIKPWLMDNKLVVGVGNIYASESLFAAGIHPDRLASSLSLAECELLARVIKAVLLRSIEQGGTTLKDFLQSDGKPGYFAQELQVYGRKGEPCRVCGTPIVATKHAQRATFYCRQCQK</sequence>
<organism>
    <name type="scientific">Shigella flexneri</name>
    <dbReference type="NCBI Taxonomy" id="623"/>
    <lineage>
        <taxon>Bacteria</taxon>
        <taxon>Pseudomonadati</taxon>
        <taxon>Pseudomonadota</taxon>
        <taxon>Gammaproteobacteria</taxon>
        <taxon>Enterobacterales</taxon>
        <taxon>Enterobacteriaceae</taxon>
        <taxon>Shigella</taxon>
    </lineage>
</organism>
<proteinExistence type="inferred from homology"/>
<feature type="initiator methionine" description="Removed" evidence="1">
    <location>
        <position position="1"/>
    </location>
</feature>
<feature type="chain" id="PRO_0000170863" description="Formamidopyrimidine-DNA glycosylase">
    <location>
        <begin position="2"/>
        <end position="269"/>
    </location>
</feature>
<feature type="zinc finger region" description="FPG-type" evidence="2">
    <location>
        <begin position="235"/>
        <end position="269"/>
    </location>
</feature>
<feature type="active site" description="Schiff-base intermediate with DNA" evidence="2">
    <location>
        <position position="2"/>
    </location>
</feature>
<feature type="active site" description="Proton donor" evidence="2">
    <location>
        <position position="3"/>
    </location>
</feature>
<feature type="active site" description="Proton donor; for beta-elimination activity" evidence="2">
    <location>
        <position position="57"/>
    </location>
</feature>
<feature type="active site" description="Proton donor; for delta-elimination activity" evidence="2">
    <location>
        <position position="259"/>
    </location>
</feature>
<feature type="binding site" evidence="2">
    <location>
        <position position="90"/>
    </location>
    <ligand>
        <name>DNA</name>
        <dbReference type="ChEBI" id="CHEBI:16991"/>
    </ligand>
</feature>
<feature type="binding site" evidence="2">
    <location>
        <position position="109"/>
    </location>
    <ligand>
        <name>DNA</name>
        <dbReference type="ChEBI" id="CHEBI:16991"/>
    </ligand>
</feature>
<feature type="binding site" evidence="2">
    <location>
        <position position="150"/>
    </location>
    <ligand>
        <name>DNA</name>
        <dbReference type="ChEBI" id="CHEBI:16991"/>
    </ligand>
</feature>
<evidence type="ECO:0000250" key="1"/>
<evidence type="ECO:0000255" key="2">
    <source>
        <dbReference type="HAMAP-Rule" id="MF_00103"/>
    </source>
</evidence>
<protein>
    <recommendedName>
        <fullName evidence="2">Formamidopyrimidine-DNA glycosylase</fullName>
        <shortName evidence="2">Fapy-DNA glycosylase</shortName>
        <ecNumber evidence="2">3.2.2.23</ecNumber>
    </recommendedName>
    <alternativeName>
        <fullName evidence="2">DNA-(apurinic or apyrimidinic site) lyase MutM</fullName>
        <shortName evidence="2">AP lyase MutM</shortName>
        <ecNumber evidence="2">4.2.99.18</ecNumber>
    </alternativeName>
</protein>
<name>FPG_SHIFL</name>